<name>MDL_GRATM</name>
<comment type="function">
    <text evidence="2 3">Hydroxynitrile lyase which catalyzes mandelonitrile formation from benzaldehyde and hydrogen cyanide with high stereoselectivity in presence of manganese.</text>
</comment>
<comment type="catalytic activity">
    <reaction evidence="2 3">
        <text>(R)-mandelonitrile = benzaldehyde + hydrogen cyanide</text>
        <dbReference type="Rhea" id="RHEA:18313"/>
        <dbReference type="ChEBI" id="CHEBI:17169"/>
        <dbReference type="ChEBI" id="CHEBI:18407"/>
        <dbReference type="ChEBI" id="CHEBI:18450"/>
        <dbReference type="EC" id="4.1.2.10"/>
    </reaction>
</comment>
<comment type="cofactor">
    <cofactor evidence="2 3">
        <name>Mn(2+)</name>
        <dbReference type="ChEBI" id="CHEBI:29035"/>
    </cofactor>
</comment>
<comment type="biophysicochemical properties">
    <kinetics>
        <KM evidence="2">10.3 mM for (R)-mandelonitrile (at pH 4.5 and at 25 degrees Celsius)</KM>
        <KM evidence="3">6.1 mM for (R)-mandelonitrile (at pH 5.5 and at 5 degrees Celsius)</KM>
        <Vmax evidence="2">0.12 umol/min/mg enzyme (at pH 4.5 and at 25 degrees Celsius)</Vmax>
        <Vmax evidence="2">1.74 umol/min/mg enzyme (at pH 6 and at 25 degrees Celsius)</Vmax>
        <text evidence="2 3">kcat is 0.03 sec(-1) with (R)-mandelonitrile as substrate (at pH 4.5 and at 25 degrees Celsius). kcat is 0.0075 sec(-1) with (R)-mandelonitrile as substrate (at pH 5.5 and at 5 degrees Celsius).</text>
    </kinetics>
    <phDependence>
        <text evidence="2">Optimum pH is 6.</text>
    </phDependence>
</comment>
<comment type="similarity">
    <text evidence="5">Belongs to the cupin domain-containing hydroxynitrile lyase family.</text>
</comment>
<organism evidence="6 7">
    <name type="scientific">Granulicella tundricola (strain ATCC BAA-1859 / DSM 23138 / MP5ACTX9)</name>
    <dbReference type="NCBI Taxonomy" id="1198114"/>
    <lineage>
        <taxon>Bacteria</taxon>
        <taxon>Pseudomonadati</taxon>
        <taxon>Acidobacteriota</taxon>
        <taxon>Terriglobia</taxon>
        <taxon>Terriglobales</taxon>
        <taxon>Acidobacteriaceae</taxon>
        <taxon>Granulicella</taxon>
    </lineage>
</organism>
<protein>
    <recommendedName>
        <fullName evidence="5">(R)-mandelonitrile lyase</fullName>
        <ecNumber evidence="2 3">4.1.2.10</ecNumber>
    </recommendedName>
    <alternativeName>
        <fullName evidence="4">Hydroxynitrile lyase</fullName>
        <shortName evidence="4">GtHNL</shortName>
    </alternativeName>
</protein>
<proteinExistence type="evidence at protein level"/>
<evidence type="ECO:0000255" key="1"/>
<evidence type="ECO:0000269" key="2">
    <source>
    </source>
</evidence>
<evidence type="ECO:0000269" key="3">
    <source ref="3"/>
</evidence>
<evidence type="ECO:0000303" key="4">
    <source>
    </source>
</evidence>
<evidence type="ECO:0000305" key="5"/>
<evidence type="ECO:0000312" key="6">
    <source>
        <dbReference type="EMBL" id="ADW67633.1"/>
    </source>
</evidence>
<evidence type="ECO:0000312" key="7">
    <source>
        <dbReference type="Proteomes" id="UP000000343"/>
    </source>
</evidence>
<evidence type="ECO:0007744" key="8">
    <source>
        <dbReference type="PDB" id="4BIF"/>
    </source>
</evidence>
<evidence type="ECO:0007744" key="9">
    <source>
        <dbReference type="PDB" id="4UXA"/>
    </source>
</evidence>
<evidence type="ECO:0007829" key="10">
    <source>
        <dbReference type="PDB" id="4UXA"/>
    </source>
</evidence>
<gene>
    <name evidence="6" type="ordered locus">AciX9_0562</name>
</gene>
<accession>E8WYN5</accession>
<dbReference type="EC" id="4.1.2.10" evidence="2 3"/>
<dbReference type="EMBL" id="CP002480">
    <property type="protein sequence ID" value="ADW67633.1"/>
    <property type="molecule type" value="Genomic_DNA"/>
</dbReference>
<dbReference type="RefSeq" id="WP_013578961.1">
    <property type="nucleotide sequence ID" value="NC_015064.1"/>
</dbReference>
<dbReference type="PDB" id="4BIF">
    <property type="method" value="X-ray"/>
    <property type="resolution" value="2.46 A"/>
    <property type="chains" value="A/B/C/D/E/F/G/H=1-131"/>
</dbReference>
<dbReference type="PDB" id="4UXA">
    <property type="method" value="X-ray"/>
    <property type="resolution" value="2.10 A"/>
    <property type="chains" value="A/B/C/D/E/F/G/H/I/J/K/L/M/N/O/P/Q/R/S/T=1-131"/>
</dbReference>
<dbReference type="PDB" id="8OZ8">
    <property type="method" value="X-ray"/>
    <property type="resolution" value="1.85 A"/>
    <property type="chains" value="A/B/C/D=1-131"/>
</dbReference>
<dbReference type="PDBsum" id="4BIF"/>
<dbReference type="PDBsum" id="4UXA"/>
<dbReference type="PDBsum" id="8OZ8"/>
<dbReference type="SMR" id="E8WYN5"/>
<dbReference type="MINT" id="E8WYN5"/>
<dbReference type="STRING" id="1198114.AciX9_0562"/>
<dbReference type="PaxDb" id="1198114-AciX9_0562"/>
<dbReference type="KEGG" id="acm:AciX9_0562"/>
<dbReference type="eggNOG" id="COG1917">
    <property type="taxonomic scope" value="Bacteria"/>
</dbReference>
<dbReference type="HOGENOM" id="CLU_072993_1_4_0"/>
<dbReference type="OrthoDB" id="9802489at2"/>
<dbReference type="BRENDA" id="4.1.2.10">
    <property type="organism ID" value="13708"/>
</dbReference>
<dbReference type="EvolutionaryTrace" id="E8WYN5"/>
<dbReference type="Proteomes" id="UP000000343">
    <property type="component" value="Chromosome"/>
</dbReference>
<dbReference type="GO" id="GO:0016829">
    <property type="term" value="F:lyase activity"/>
    <property type="evidence" value="ECO:0007669"/>
    <property type="project" value="UniProtKB-KW"/>
</dbReference>
<dbReference type="GO" id="GO:0046872">
    <property type="term" value="F:metal ion binding"/>
    <property type="evidence" value="ECO:0007669"/>
    <property type="project" value="UniProtKB-KW"/>
</dbReference>
<dbReference type="CDD" id="cd02233">
    <property type="entry name" value="cupin_HNL-like"/>
    <property type="match status" value="1"/>
</dbReference>
<dbReference type="Gene3D" id="2.60.120.10">
    <property type="entry name" value="Jelly Rolls"/>
    <property type="match status" value="1"/>
</dbReference>
<dbReference type="InterPro" id="IPR013096">
    <property type="entry name" value="Cupin_2"/>
</dbReference>
<dbReference type="InterPro" id="IPR047263">
    <property type="entry name" value="HNL-like_cupin"/>
</dbReference>
<dbReference type="InterPro" id="IPR014710">
    <property type="entry name" value="RmlC-like_jellyroll"/>
</dbReference>
<dbReference type="InterPro" id="IPR011051">
    <property type="entry name" value="RmlC_Cupin_sf"/>
</dbReference>
<dbReference type="PANTHER" id="PTHR43698:SF1">
    <property type="entry name" value="BLL4564 PROTEIN"/>
    <property type="match status" value="1"/>
</dbReference>
<dbReference type="PANTHER" id="PTHR43698">
    <property type="entry name" value="RIBD C-TERMINAL DOMAIN CONTAINING PROTEIN"/>
    <property type="match status" value="1"/>
</dbReference>
<dbReference type="Pfam" id="PF07883">
    <property type="entry name" value="Cupin_2"/>
    <property type="match status" value="1"/>
</dbReference>
<dbReference type="SUPFAM" id="SSF51182">
    <property type="entry name" value="RmlC-like cupins"/>
    <property type="match status" value="1"/>
</dbReference>
<keyword id="KW-0002">3D-structure</keyword>
<keyword id="KW-0456">Lyase</keyword>
<keyword id="KW-0464">Manganese</keyword>
<keyword id="KW-0479">Metal-binding</keyword>
<keyword id="KW-1185">Reference proteome</keyword>
<reference evidence="7" key="1">
    <citation type="submission" date="2011-01" db="EMBL/GenBank/DDBJ databases">
        <title>Complete sequence of chromosome of Acidobacterium sp. MP5ACTX9.</title>
        <authorList>
            <consortium name="US DOE Joint Genome Institute"/>
            <person name="Lucas S."/>
            <person name="Copeland A."/>
            <person name="Lapidus A."/>
            <person name="Cheng J.-F."/>
            <person name="Goodwin L."/>
            <person name="Pitluck S."/>
            <person name="Teshima H."/>
            <person name="Detter J.C."/>
            <person name="Han C."/>
            <person name="Tapia R."/>
            <person name="Land M."/>
            <person name="Hauser L."/>
            <person name="Kyrpides N."/>
            <person name="Ivanova N."/>
            <person name="Ovchinnikova G."/>
            <person name="Pagani I."/>
            <person name="Rawat S.R."/>
            <person name="Mannisto M."/>
            <person name="Haggblom M.M."/>
            <person name="Woyke T."/>
        </authorList>
    </citation>
    <scope>NUCLEOTIDE SEQUENCE [LARGE SCALE GENOMIC DNA]</scope>
    <source>
        <strain evidence="7">ATCC BAA-1859 / DSM 23138 / MP5ACTX9</strain>
    </source>
</reference>
<reference evidence="8" key="2">
    <citation type="journal article" date="2013" name="FEBS J.">
        <title>Biochemical and structural characterization of a novel bacterial manganese-dependent hydroxynitrile lyase.</title>
        <authorList>
            <person name="Hajnal I."/>
            <person name="Lyskowski A."/>
            <person name="Hanefeld U."/>
            <person name="Gruber K."/>
            <person name="Schwab H."/>
            <person name="Steiner K."/>
        </authorList>
    </citation>
    <scope>X-RAY CRYSTALLOGRAPHY (2.46 ANGSTROMS) IN COMPLEX WITH MANGANESE</scope>
    <scope>CATALYTIC ACTIVITY</scope>
    <scope>COFACTOR</scope>
    <scope>BIOPHYSICOCHEMICAL PROPERTIES</scope>
    <scope>MUTAGENESIS OF THR-50; HIS-53; HIS-55; GLN-59; HIS-94; HIS-96 AND HIS-106</scope>
</reference>
<reference evidence="9" key="3">
    <citation type="journal article" date="2015" name="ChemCatChem">
        <title>Improving the Properties of Bacterial R-Selective Hydroxynitrile Lyases for Industrial Applications.</title>
        <authorList>
            <person name="Wiedner R."/>
            <person name="Kothbauer B."/>
            <person name="Pavkov-Keller T."/>
            <person name="Gruber-Khadjawi M."/>
            <person name="Grube K."/>
            <person name="Schwab H."/>
            <person name="Steiner K."/>
        </authorList>
    </citation>
    <scope>X-RAY CRYSTALLOGRAPHY (2.10 ANGSTROMS) OF MUTANT ALA-40; VAL-42 AND GLN-110 IN COMPLEX WITH MANGANESE</scope>
    <scope>FUNCTION</scope>
    <scope>CATALYTIC ACTIVITY</scope>
    <scope>COFACTOR</scope>
    <scope>BIOPHYSICOCHEMICAL PROPERTIES</scope>
    <scope>MUTAGENESIS OF ILE-3; PHE-19; THR-20; ILE-25; PHE-29; LEU-36; ALA-40; VAL-42; ILE-109; GLN-110; ALA-117 AND TRP-120</scope>
</reference>
<feature type="chain" id="PRO_0000458631" description="(R)-mandelonitrile lyase">
    <location>
        <begin position="1"/>
        <end position="131"/>
    </location>
</feature>
<feature type="domain" description="Cupin type-2" evidence="1">
    <location>
        <begin position="42"/>
        <end position="104"/>
    </location>
</feature>
<feature type="binding site" evidence="2 3 8 9">
    <location>
        <position position="53"/>
    </location>
    <ligand>
        <name>Mn(2+)</name>
        <dbReference type="ChEBI" id="CHEBI:29035"/>
    </ligand>
</feature>
<feature type="binding site" evidence="2 3 8 9">
    <location>
        <position position="55"/>
    </location>
    <ligand>
        <name>Mn(2+)</name>
        <dbReference type="ChEBI" id="CHEBI:29035"/>
    </ligand>
</feature>
<feature type="binding site" evidence="2 3 8 9">
    <location>
        <position position="59"/>
    </location>
    <ligand>
        <name>Mn(2+)</name>
        <dbReference type="ChEBI" id="CHEBI:29035"/>
    </ligand>
</feature>
<feature type="binding site" evidence="2 3 8 9">
    <location>
        <position position="94"/>
    </location>
    <ligand>
        <name>Mn(2+)</name>
        <dbReference type="ChEBI" id="CHEBI:29035"/>
    </ligand>
</feature>
<feature type="binding site" evidence="2 3 8 9">
    <location>
        <position position="96"/>
    </location>
    <ligand>
        <name>Mn(2+)</name>
        <dbReference type="ChEBI" id="CHEBI:29035"/>
    </ligand>
</feature>
<feature type="mutagenesis site" description="Increases catalytic activity and enantioselectivity in vitro; when associated with A-20." evidence="3">
    <original>I</original>
    <variation>L</variation>
    <location>
        <position position="3"/>
    </location>
</feature>
<feature type="mutagenesis site" description="Increases active towards (S)-2-chloromandelonitrile in vitro." evidence="3">
    <original>F</original>
    <variation>V</variation>
    <location>
        <position position="19"/>
    </location>
</feature>
<feature type="mutagenesis site" description="Increases catalytic activity and enantioselectivity in vitro; when associated with L-3." evidence="3">
    <original>T</original>
    <variation>A</variation>
    <location>
        <position position="20"/>
    </location>
</feature>
<feature type="mutagenesis site" description="Increases catalytic activity and enantioselectivity in vitro; when associated with Q-36." evidence="3">
    <original>I</original>
    <variation>M</variation>
    <location>
        <position position="25"/>
    </location>
</feature>
<feature type="mutagenesis site" description="Increases enzymatic activity and enantioselectivity in vitro; when associated with R-36 and A-42." evidence="3">
    <original>F</original>
    <variation>L</variation>
    <location>
        <position position="29"/>
    </location>
</feature>
<feature type="mutagenesis site" description="Increases catalytic activity and enantioselectivity in vitro; when associated with M-25." evidence="3">
    <original>L</original>
    <variation>Q</variation>
    <location>
        <position position="36"/>
    </location>
</feature>
<feature type="mutagenesis site" description="Increases enzymatic activity and enantioselectivity in vitro; when associated with L-29 and A-42." evidence="3">
    <original>L</original>
    <variation>R</variation>
    <location>
        <position position="36"/>
    </location>
</feature>
<feature type="mutagenesis site" description="Increases enzymatic activity and enantioselectivity in vitro. Further increases in enzymatic activity and enantioselectivity in vitro; when associated with T-42 and H-110." evidence="3">
    <original>A</original>
    <variation>H</variation>
    <location>
        <position position="40"/>
    </location>
</feature>
<feature type="mutagenesis site" description="Increases enzymatic activity and enantioselectivity in vitro." evidence="3">
    <original>A</original>
    <variation>R</variation>
    <location>
        <position position="40"/>
    </location>
</feature>
<feature type="mutagenesis site" description="Increases enzymatic activity and enantioselectivity in vitro; when associated with L-29 and R-36." evidence="3">
    <original>V</original>
    <variation>A</variation>
    <location>
        <position position="42"/>
    </location>
</feature>
<feature type="mutagenesis site" description="Increases enzymatic activity and enantioselectivity in vitro. Further increases in enzymatic activity and enantioselectivity in vitro; when associated with H-40 and H-110." evidence="3">
    <original>V</original>
    <variation>T</variation>
    <location>
        <position position="42"/>
    </location>
</feature>
<feature type="mutagenesis site" description="Does not affect mandelonitrile synthesis in vitro." evidence="2">
    <original>T</original>
    <variation>A</variation>
    <location>
        <position position="50"/>
    </location>
</feature>
<feature type="mutagenesis site" description="Loss of mandelonitrile cyanolysis and cyanohydrin synthesis activity in vitro. Reduced metal binding in vitro." evidence="2">
    <original>H</original>
    <variation>A</variation>
    <location>
        <position position="53"/>
    </location>
</feature>
<feature type="mutagenesis site" description="Loss of mandelonitrile cyanolysis and cyanohydrin synthesis activity in vitro. Reduced metal binding in vitro." evidence="2">
    <original>H</original>
    <variation>A</variation>
    <location>
        <position position="55"/>
    </location>
</feature>
<feature type="mutagenesis site" description="Loss of mandelonitrile cyanolysis and cyanohydrin synthesis activity in vitro. Decreased metal binding in vitro." evidence="2">
    <original>Q</original>
    <variation>A</variation>
    <location>
        <position position="59"/>
    </location>
</feature>
<feature type="mutagenesis site" description="Decreased mandelonitrile cyanolysis activity in vitro. Decreased metal binding in vitro." evidence="2">
    <original>H</original>
    <variation>A</variation>
    <location>
        <position position="94"/>
    </location>
</feature>
<feature type="mutagenesis site" description="Decreased mandelonitrile cyanolysis activity but complete loss of mandelonitrile synthesis activity and enantioselectivity in vitro. Does not affect metal binding in vitro." evidence="2">
    <original>H</original>
    <variation>A</variation>
    <location>
        <position position="96"/>
    </location>
</feature>
<feature type="mutagenesis site" description="Results in a soluble but inactive enzyme in vitro." evidence="2">
    <original>H</original>
    <variation>K</variation>
    <variation>D</variation>
    <location>
        <position position="96"/>
    </location>
</feature>
<feature type="mutagenesis site" description="Results in an insoluble protein in vitro." evidence="2">
    <original>H</original>
    <variation>R</variation>
    <location>
        <position position="96"/>
    </location>
</feature>
<feature type="mutagenesis site" description="Results in soluble proteins but inactive in vitro." evidence="2">
    <original>H</original>
    <variation>A</variation>
    <variation>L</variation>
    <location>
        <position position="106"/>
    </location>
</feature>
<feature type="mutagenesis site" description="Partial loss of mandelonitrile synthesis activity in vitro." evidence="2">
    <original>H</original>
    <variation>D</variation>
    <location>
        <position position="106"/>
    </location>
</feature>
<feature type="mutagenesis site" description="Increases catalytic activity and enantioselectivity in vitro; when associated with V-117." evidence="3">
    <original>I</original>
    <variation>L</variation>
    <location>
        <position position="109"/>
    </location>
</feature>
<feature type="mutagenesis site" description="Increases enzymatic activity and enantioselectivity in vitro. Further increases in enzymatic activity and enantioselectivity in vitro; when associated with H-40 and T-42." evidence="3">
    <original>Q</original>
    <variation>H</variation>
    <location>
        <position position="110"/>
    </location>
</feature>
<feature type="mutagenesis site" description="Increases catalytic activity and enantioselectivity in vitro; when associated with L-109." evidence="3">
    <original>A</original>
    <variation>V</variation>
    <location>
        <position position="117"/>
    </location>
</feature>
<feature type="mutagenesis site" description="Increases activity towards both enantiomers for 2-chloromandelonitrile in vitro." evidence="3">
    <original>W</original>
    <variation>R</variation>
    <location>
        <position position="120"/>
    </location>
</feature>
<feature type="strand" evidence="10">
    <location>
        <begin position="2"/>
        <end position="4"/>
    </location>
</feature>
<feature type="turn" evidence="10">
    <location>
        <begin position="16"/>
        <end position="18"/>
    </location>
</feature>
<feature type="strand" evidence="10">
    <location>
        <begin position="19"/>
        <end position="21"/>
    </location>
</feature>
<feature type="strand" evidence="10">
    <location>
        <begin position="23"/>
        <end position="30"/>
    </location>
</feature>
<feature type="strand" evidence="10">
    <location>
        <begin position="37"/>
        <end position="44"/>
    </location>
</feature>
<feature type="strand" evidence="10">
    <location>
        <begin position="52"/>
        <end position="54"/>
    </location>
</feature>
<feature type="strand" evidence="10">
    <location>
        <begin position="59"/>
        <end position="66"/>
    </location>
</feature>
<feature type="strand" evidence="10">
    <location>
        <begin position="68"/>
        <end position="72"/>
    </location>
</feature>
<feature type="strand" evidence="10">
    <location>
        <begin position="78"/>
        <end position="80"/>
    </location>
</feature>
<feature type="strand" evidence="10">
    <location>
        <begin position="85"/>
        <end position="88"/>
    </location>
</feature>
<feature type="strand" evidence="10">
    <location>
        <begin position="94"/>
        <end position="98"/>
    </location>
</feature>
<feature type="strand" evidence="10">
    <location>
        <begin position="100"/>
        <end position="102"/>
    </location>
</feature>
<feature type="strand" evidence="10">
    <location>
        <begin position="104"/>
        <end position="111"/>
    </location>
</feature>
<feature type="turn" evidence="10">
    <location>
        <begin position="126"/>
        <end position="128"/>
    </location>
</feature>
<sequence length="131" mass="14250">MEIKRVGSQASGKGPADWFTGTVRIDPLFQAPDPALVAGASVTFEPGARTAWHTHPLGQTLIVTAGCGWAQREGGAVEEIHPGDVVWFSPGEKHWHGAAPTTAMTHLAIQERLDGKAVDWMEHVTDEQYRR</sequence>